<gene>
    <name evidence="1" type="primary">dphB</name>
    <name type="synonym">dph5</name>
    <name type="ordered locus">PYRAB13240</name>
    <name type="ORF">PAB1501</name>
</gene>
<evidence type="ECO:0000255" key="1">
    <source>
        <dbReference type="HAMAP-Rule" id="MF_01084"/>
    </source>
</evidence>
<protein>
    <recommendedName>
        <fullName evidence="1">Diphthine synthase</fullName>
        <ecNumber evidence="1">2.1.1.98</ecNumber>
    </recommendedName>
    <alternativeName>
        <fullName evidence="1">Diphthamide biosynthesis methyltransferase</fullName>
    </alternativeName>
</protein>
<accession>Q9UZ31</accession>
<accession>G8ZHC9</accession>
<dbReference type="EC" id="2.1.1.98" evidence="1"/>
<dbReference type="EMBL" id="AJ248287">
    <property type="protein sequence ID" value="CAB50229.1"/>
    <property type="molecule type" value="Genomic_DNA"/>
</dbReference>
<dbReference type="EMBL" id="HE613800">
    <property type="protein sequence ID" value="CCE70766.1"/>
    <property type="molecule type" value="Genomic_DNA"/>
</dbReference>
<dbReference type="PIR" id="H75041">
    <property type="entry name" value="H75041"/>
</dbReference>
<dbReference type="RefSeq" id="WP_010868439.1">
    <property type="nucleotide sequence ID" value="NC_000868.1"/>
</dbReference>
<dbReference type="SMR" id="Q9UZ31"/>
<dbReference type="STRING" id="272844.PAB1501"/>
<dbReference type="KEGG" id="pab:PAB1501"/>
<dbReference type="PATRIC" id="fig|272844.11.peg.1409"/>
<dbReference type="eggNOG" id="arCOG04161">
    <property type="taxonomic scope" value="Archaea"/>
</dbReference>
<dbReference type="HOGENOM" id="CLU_066040_0_0_2"/>
<dbReference type="OrthoDB" id="39139at2157"/>
<dbReference type="PhylomeDB" id="Q9UZ31"/>
<dbReference type="UniPathway" id="UPA00559"/>
<dbReference type="Proteomes" id="UP000000810">
    <property type="component" value="Chromosome"/>
</dbReference>
<dbReference type="Proteomes" id="UP000009139">
    <property type="component" value="Chromosome"/>
</dbReference>
<dbReference type="GO" id="GO:0004164">
    <property type="term" value="F:diphthine synthase activity"/>
    <property type="evidence" value="ECO:0007669"/>
    <property type="project" value="UniProtKB-UniRule"/>
</dbReference>
<dbReference type="GO" id="GO:0032259">
    <property type="term" value="P:methylation"/>
    <property type="evidence" value="ECO:0007669"/>
    <property type="project" value="UniProtKB-KW"/>
</dbReference>
<dbReference type="GO" id="GO:0017183">
    <property type="term" value="P:protein histidyl modification to diphthamide"/>
    <property type="evidence" value="ECO:0007669"/>
    <property type="project" value="UniProtKB-UniRule"/>
</dbReference>
<dbReference type="CDD" id="cd11647">
    <property type="entry name" value="DHP5_DphB"/>
    <property type="match status" value="1"/>
</dbReference>
<dbReference type="FunFam" id="3.30.950.10:FF:000004">
    <property type="entry name" value="Diphthine synthase putative"/>
    <property type="match status" value="1"/>
</dbReference>
<dbReference type="FunFam" id="3.40.1010.10:FF:000004">
    <property type="entry name" value="Putative diphthine synthase"/>
    <property type="match status" value="1"/>
</dbReference>
<dbReference type="Gene3D" id="3.40.1010.10">
    <property type="entry name" value="Cobalt-precorrin-4 Transmethylase, Domain 1"/>
    <property type="match status" value="1"/>
</dbReference>
<dbReference type="Gene3D" id="3.30.950.10">
    <property type="entry name" value="Methyltransferase, Cobalt-precorrin-4 Transmethylase, Domain 2"/>
    <property type="match status" value="1"/>
</dbReference>
<dbReference type="HAMAP" id="MF_01084">
    <property type="entry name" value="Diphthine_synth"/>
    <property type="match status" value="1"/>
</dbReference>
<dbReference type="InterPro" id="IPR000878">
    <property type="entry name" value="4pyrrol_Mease"/>
</dbReference>
<dbReference type="InterPro" id="IPR035996">
    <property type="entry name" value="4pyrrol_Methylase_sf"/>
</dbReference>
<dbReference type="InterPro" id="IPR014777">
    <property type="entry name" value="4pyrrole_Mease_sub1"/>
</dbReference>
<dbReference type="InterPro" id="IPR014776">
    <property type="entry name" value="4pyrrole_Mease_sub2"/>
</dbReference>
<dbReference type="InterPro" id="IPR004551">
    <property type="entry name" value="Dphthn_synthase"/>
</dbReference>
<dbReference type="NCBIfam" id="TIGR00522">
    <property type="entry name" value="dph5"/>
    <property type="match status" value="1"/>
</dbReference>
<dbReference type="PANTHER" id="PTHR10882:SF0">
    <property type="entry name" value="DIPHTHINE METHYL ESTER SYNTHASE"/>
    <property type="match status" value="1"/>
</dbReference>
<dbReference type="PANTHER" id="PTHR10882">
    <property type="entry name" value="DIPHTHINE SYNTHASE"/>
    <property type="match status" value="1"/>
</dbReference>
<dbReference type="Pfam" id="PF00590">
    <property type="entry name" value="TP_methylase"/>
    <property type="match status" value="1"/>
</dbReference>
<dbReference type="PIRSF" id="PIRSF036432">
    <property type="entry name" value="Diphthine_synth"/>
    <property type="match status" value="1"/>
</dbReference>
<dbReference type="SUPFAM" id="SSF53790">
    <property type="entry name" value="Tetrapyrrole methylase"/>
    <property type="match status" value="1"/>
</dbReference>
<organism>
    <name type="scientific">Pyrococcus abyssi (strain GE5 / Orsay)</name>
    <dbReference type="NCBI Taxonomy" id="272844"/>
    <lineage>
        <taxon>Archaea</taxon>
        <taxon>Methanobacteriati</taxon>
        <taxon>Methanobacteriota</taxon>
        <taxon>Thermococci</taxon>
        <taxon>Thermococcales</taxon>
        <taxon>Thermococcaceae</taxon>
        <taxon>Pyrococcus</taxon>
    </lineage>
</organism>
<keyword id="KW-0489">Methyltransferase</keyword>
<keyword id="KW-0949">S-adenosyl-L-methionine</keyword>
<keyword id="KW-0808">Transferase</keyword>
<comment type="function">
    <text evidence="1">S-adenosyl-L-methionine-dependent methyltransferase that catalyzes the trimethylation of the amino group of the modified target histidine residue in translation elongation factor 2 (EF-2), to form an intermediate called diphthine. The three successive methylation reactions represent the second step of diphthamide biosynthesis.</text>
</comment>
<comment type="catalytic activity">
    <reaction evidence="1">
        <text>2-[(3S)-amino-3-carboxypropyl]-L-histidyl-[translation elongation factor 2] + 3 S-adenosyl-L-methionine = diphthine-[translation elongation factor 2] + 3 S-adenosyl-L-homocysteine + 3 H(+)</text>
        <dbReference type="Rhea" id="RHEA:36415"/>
        <dbReference type="Rhea" id="RHEA-COMP:9749"/>
        <dbReference type="Rhea" id="RHEA-COMP:10172"/>
        <dbReference type="ChEBI" id="CHEBI:15378"/>
        <dbReference type="ChEBI" id="CHEBI:57856"/>
        <dbReference type="ChEBI" id="CHEBI:59789"/>
        <dbReference type="ChEBI" id="CHEBI:73995"/>
        <dbReference type="ChEBI" id="CHEBI:82696"/>
        <dbReference type="EC" id="2.1.1.98"/>
    </reaction>
</comment>
<comment type="pathway">
    <text evidence="1">Protein modification; peptidyl-diphthamide biosynthesis.</text>
</comment>
<comment type="subunit">
    <text evidence="1">Homodimer.</text>
</comment>
<comment type="similarity">
    <text evidence="1">Belongs to the diphthine synthase family.</text>
</comment>
<sequence>MALYFIGLGLYDEKDITLKGLEIARKCDYVFAEFYTSLMAGTNLERIEKLIGKEIRVLSREDVELNFERIVLPLAKDHDVAFLTAGDPLVATTHAELRLRAKKFGVESYVIHAPSIYSAIAITGLHIYKFGKSATISYPEKNWFPTSYYDVIKENLERGLHTLLFLDIKAEKGKYMTANEGMKLLLKVEDMKKEGVFTQETLVVVLARAGSLNPVIRAGYVRDMIREDFGSPPHVLIVPGRLHIVEAEYLVEIAGAPREIIR</sequence>
<feature type="chain" id="PRO_0000156123" description="Diphthine synthase">
    <location>
        <begin position="1"/>
        <end position="262"/>
    </location>
</feature>
<feature type="binding site" evidence="1">
    <location>
        <position position="10"/>
    </location>
    <ligand>
        <name>S-adenosyl-L-methionine</name>
        <dbReference type="ChEBI" id="CHEBI:59789"/>
    </ligand>
</feature>
<feature type="binding site" evidence="1">
    <location>
        <position position="87"/>
    </location>
    <ligand>
        <name>S-adenosyl-L-methionine</name>
        <dbReference type="ChEBI" id="CHEBI:59789"/>
    </ligand>
</feature>
<feature type="binding site" evidence="1">
    <location>
        <position position="90"/>
    </location>
    <ligand>
        <name>S-adenosyl-L-methionine</name>
        <dbReference type="ChEBI" id="CHEBI:59789"/>
    </ligand>
</feature>
<feature type="binding site" evidence="1">
    <location>
        <begin position="115"/>
        <end position="116"/>
    </location>
    <ligand>
        <name>S-adenosyl-L-methionine</name>
        <dbReference type="ChEBI" id="CHEBI:59789"/>
    </ligand>
</feature>
<feature type="binding site" evidence="1">
    <location>
        <position position="166"/>
    </location>
    <ligand>
        <name>S-adenosyl-L-methionine</name>
        <dbReference type="ChEBI" id="CHEBI:59789"/>
    </ligand>
</feature>
<feature type="binding site" evidence="1">
    <location>
        <position position="209"/>
    </location>
    <ligand>
        <name>S-adenosyl-L-methionine</name>
        <dbReference type="ChEBI" id="CHEBI:59789"/>
    </ligand>
</feature>
<feature type="binding site" evidence="1">
    <location>
        <position position="234"/>
    </location>
    <ligand>
        <name>S-adenosyl-L-methionine</name>
        <dbReference type="ChEBI" id="CHEBI:59789"/>
    </ligand>
</feature>
<proteinExistence type="inferred from homology"/>
<name>DPHB_PYRAB</name>
<reference key="1">
    <citation type="journal article" date="2003" name="Mol. Microbiol.">
        <title>An integrated analysis of the genome of the hyperthermophilic archaeon Pyrococcus abyssi.</title>
        <authorList>
            <person name="Cohen G.N."/>
            <person name="Barbe V."/>
            <person name="Flament D."/>
            <person name="Galperin M."/>
            <person name="Heilig R."/>
            <person name="Lecompte O."/>
            <person name="Poch O."/>
            <person name="Prieur D."/>
            <person name="Querellou J."/>
            <person name="Ripp R."/>
            <person name="Thierry J.-C."/>
            <person name="Van der Oost J."/>
            <person name="Weissenbach J."/>
            <person name="Zivanovic Y."/>
            <person name="Forterre P."/>
        </authorList>
    </citation>
    <scope>NUCLEOTIDE SEQUENCE [LARGE SCALE GENOMIC DNA]</scope>
    <source>
        <strain>GE5 / Orsay</strain>
    </source>
</reference>
<reference key="2">
    <citation type="journal article" date="2012" name="Curr. Microbiol.">
        <title>Re-annotation of two hyperthermophilic archaea Pyrococcus abyssi GE5 and Pyrococcus furiosus DSM 3638.</title>
        <authorList>
            <person name="Gao J."/>
            <person name="Wang J."/>
        </authorList>
    </citation>
    <scope>GENOME REANNOTATION</scope>
    <source>
        <strain>GE5 / Orsay</strain>
    </source>
</reference>